<organism>
    <name type="scientific">Trypanosoma cruzi</name>
    <dbReference type="NCBI Taxonomy" id="5693"/>
    <lineage>
        <taxon>Eukaryota</taxon>
        <taxon>Discoba</taxon>
        <taxon>Euglenozoa</taxon>
        <taxon>Kinetoplastea</taxon>
        <taxon>Metakinetoplastina</taxon>
        <taxon>Trypanosomatida</taxon>
        <taxon>Trypanosomatidae</taxon>
        <taxon>Trypanosoma</taxon>
        <taxon>Schizotrypanum</taxon>
    </lineage>
</organism>
<proteinExistence type="evidence at transcript level"/>
<keyword id="KW-0326">Glycosidase</keyword>
<keyword id="KW-0378">Hydrolase</keyword>
<keyword id="KW-0677">Repeat</keyword>
<gene>
    <name type="primary">SA85-1.3</name>
</gene>
<accession>P18271</accession>
<reference key="1">
    <citation type="journal article" date="1990" name="J. Exp. Med.">
        <title>The major 85-kD surface antigen of the mammalian form of Trypanosoma cruzi is encoded by a large heterogeneous family of simultaneously expressed genes.</title>
        <authorList>
            <person name="Kahn S."/>
            <person name="van Voorhis W."/>
            <person name="Eisen H."/>
        </authorList>
    </citation>
    <scope>NUCLEOTIDE SEQUENCE [MRNA]</scope>
    <source>
        <strain>CL</strain>
    </source>
</reference>
<evidence type="ECO:0000305" key="1"/>
<feature type="chain" id="PRO_0000208912" description="Sialidase 85-1.3">
    <location>
        <begin position="1" status="less than"/>
        <end position="175"/>
    </location>
</feature>
<feature type="non-terminal residue">
    <location>
        <position position="1"/>
    </location>
</feature>
<name>8513_TRYCR</name>
<comment type="function">
    <text>Developmentally regulated neuraminidase implicated in parasite invasion of cells. May contribute to the pathology during T.cruzi infection by cleaving sialic acid from cells of the immune system.</text>
</comment>
<comment type="catalytic activity">
    <reaction>
        <text>Hydrolysis of alpha-(2-&gt;3)-, alpha-(2-&gt;6)-, alpha-(2-&gt;8)- glycosidic linkages of terminal sialic acid residues in oligosaccharides, glycoproteins, glycolipids, colominic acid and synthetic substrates.</text>
        <dbReference type="EC" id="3.2.1.18"/>
    </reaction>
</comment>
<comment type="developmental stage">
    <text>Mammalian stage of parasite.</text>
</comment>
<comment type="miscellaneous">
    <text>The parasite mammalian stage surface antigen exhibits extensive antigenic diversity.</text>
</comment>
<comment type="similarity">
    <text evidence="1">Belongs to the glycosyl hydrolase 33 family.</text>
</comment>
<protein>
    <recommendedName>
        <fullName>Sialidase 85-1.3</fullName>
        <ecNumber>3.2.1.18</ecNumber>
    </recommendedName>
    <alternativeName>
        <fullName>Major 85 kDa surface antigen</fullName>
    </alternativeName>
    <alternativeName>
        <fullName>Neuraminidase</fullName>
        <shortName>NA</shortName>
    </alternativeName>
    <alternativeName>
        <fullName>SA85-1.3 protein</fullName>
    </alternativeName>
</protein>
<sequence>LCLNATVRNATKVKDGFQLTEPDSGVMWPVNIPDYNKRHVFLNHNFTLVASVTIEEAPSGNTPLLIAVLANTEPTHTMRILYTADNKWMTMLKDEKKPTTESGTWEPKKEHQVALMLQGNKASVYVDGELLGEEEVPLTGEKPLELFAFCFGACGEENPSQESHVTVTNVFLYNR</sequence>
<dbReference type="EC" id="3.2.1.18"/>
<dbReference type="EMBL" id="X53547">
    <property type="protein sequence ID" value="CAA37619.1"/>
    <property type="molecule type" value="mRNA"/>
</dbReference>
<dbReference type="PIR" id="S11294">
    <property type="entry name" value="S11294"/>
</dbReference>
<dbReference type="SMR" id="P18271"/>
<dbReference type="VEuPathDB" id="TriTrypDB:BCY84_22557"/>
<dbReference type="VEuPathDB" id="TriTrypDB:C3747_88g95"/>
<dbReference type="VEuPathDB" id="TriTrypDB:C4B63_155g14"/>
<dbReference type="VEuPathDB" id="TriTrypDB:ECC02_012905"/>
<dbReference type="VEuPathDB" id="TriTrypDB:Tc_MARK_7633"/>
<dbReference type="VEuPathDB" id="TriTrypDB:TcBrA4_0142060"/>
<dbReference type="VEuPathDB" id="TriTrypDB:TcCL_NonESM11807"/>
<dbReference type="VEuPathDB" id="TriTrypDB:TcCLB.463279.20"/>
<dbReference type="VEuPathDB" id="TriTrypDB:TcCLB.506537.80"/>
<dbReference type="VEuPathDB" id="TriTrypDB:TcCLB.508285.60"/>
<dbReference type="VEuPathDB" id="TriTrypDB:TCDM_12359"/>
<dbReference type="VEuPathDB" id="TriTrypDB:TcG_10017"/>
<dbReference type="VEuPathDB" id="TriTrypDB:TCSYLVIO_008783"/>
<dbReference type="VEuPathDB" id="TriTrypDB:TcYC6_0130460"/>
<dbReference type="GO" id="GO:0004308">
    <property type="term" value="F:exo-alpha-sialidase activity"/>
    <property type="evidence" value="ECO:0007669"/>
    <property type="project" value="UniProtKB-EC"/>
</dbReference>
<dbReference type="Gene3D" id="2.60.120.200">
    <property type="match status" value="1"/>
</dbReference>
<dbReference type="InterPro" id="IPR013320">
    <property type="entry name" value="ConA-like_dom_sf"/>
</dbReference>
<dbReference type="InterPro" id="IPR008377">
    <property type="entry name" value="Sialidase_trypan"/>
</dbReference>
<dbReference type="InterPro" id="IPR055239">
    <property type="entry name" value="TS_C"/>
</dbReference>
<dbReference type="Pfam" id="PF22925">
    <property type="entry name" value="TS_C"/>
    <property type="match status" value="1"/>
</dbReference>
<dbReference type="PRINTS" id="PR01803">
    <property type="entry name" value="TCSIALIDASE"/>
</dbReference>
<dbReference type="SUPFAM" id="SSF49899">
    <property type="entry name" value="Concanavalin A-like lectins/glucanases"/>
    <property type="match status" value="1"/>
</dbReference>